<sequence>MKKLIYYFGSNGSDGNASMKNVLGNKGAGLAEMSNLKLPIPDGFTITTELCNYFYTHNNNFPKNFQNDLKKAITELEITTGKIFGSTSNPLLLSVRSGSTVSMPGMMDTILNLGMNNEVCNALTDSCGDKRFALDSYKRFLEMYGTTVLSIPSDLFEQIYEKHKIQADIHKDSDITVELLEKIIDDFKWLHIKYTKQLINDPYEQLESAIKAVLHSWMSNRAVIYRKINNISEGFGTAINIQAMVFGNLGKTSATGVAFTRSPSTGEKKLFGEFLINAQGEDIVSGTRTPMPIIANDSNSMQAMMPEVFKELSQIAKKLEEHYLDMQDIEFTIENNKLYILQTRTAKRTAIAAINIAVQMVEEKLISKEQALMRIDPESLNQLLHTRIDYSKGLTSIAEGLPASPGAATGIAVFSPYDAEKLSHHHKVILVRHDTSPEDINGMHVSSGILTIRGGMTSHAAVVARGMGKPCVCGTSNLSIDEKKQILTAGDIVIKQGDIITIDGGSGKIFLGEMPLIQPTFSEESKLILDWADEISSLKVRANAETVNDALVSIKFGAQGIGLCRSEHMFFDKNKIPLVREMIIAPDIERRKLAVQKLLPLQMEDFKALFRVMKDKPVNIRLLDPPLHEFLPTTEEDKKNLANSLNLPLSMINQRLHAMHEVNPMLGHRGCRLGICSPEIYQMQIEAIFTAIFELHKKEHIECNLELMMPLISNVGEIKKLKMDIYEVIEELEQRYRYKFSFMLGTMIELPRAALGSKKIAKEVDYFSFGTNDLTQTTYGISRDDIASFLPYYLEEKIFESDPFTTLDEEGVGELIEIALKRGKSSNANLKLGACGEHAGNPASIEFFHRMNLNYVSCSPYRIPIARIASAQAKIKHG</sequence>
<dbReference type="EC" id="2.7.9.1" evidence="3"/>
<dbReference type="EMBL" id="CP000053">
    <property type="protein sequence ID" value="AAY61586.1"/>
    <property type="molecule type" value="Genomic_DNA"/>
</dbReference>
<dbReference type="SMR" id="Q4ULI7"/>
<dbReference type="STRING" id="315456.RF_0735"/>
<dbReference type="KEGG" id="rfe:RF_0735"/>
<dbReference type="eggNOG" id="COG0574">
    <property type="taxonomic scope" value="Bacteria"/>
</dbReference>
<dbReference type="eggNOG" id="COG1080">
    <property type="taxonomic scope" value="Bacteria"/>
</dbReference>
<dbReference type="HOGENOM" id="CLU_015345_0_2_5"/>
<dbReference type="OrthoDB" id="9765468at2"/>
<dbReference type="Proteomes" id="UP000008548">
    <property type="component" value="Chromosome"/>
</dbReference>
<dbReference type="GO" id="GO:0005524">
    <property type="term" value="F:ATP binding"/>
    <property type="evidence" value="ECO:0007669"/>
    <property type="project" value="UniProtKB-KW"/>
</dbReference>
<dbReference type="GO" id="GO:0016301">
    <property type="term" value="F:kinase activity"/>
    <property type="evidence" value="ECO:0007669"/>
    <property type="project" value="UniProtKB-KW"/>
</dbReference>
<dbReference type="GO" id="GO:0046872">
    <property type="term" value="F:metal ion binding"/>
    <property type="evidence" value="ECO:0007669"/>
    <property type="project" value="UniProtKB-KW"/>
</dbReference>
<dbReference type="GO" id="GO:0050242">
    <property type="term" value="F:pyruvate, phosphate dikinase activity"/>
    <property type="evidence" value="ECO:0007669"/>
    <property type="project" value="UniProtKB-EC"/>
</dbReference>
<dbReference type="Gene3D" id="1.20.80.30">
    <property type="match status" value="1"/>
</dbReference>
<dbReference type="Gene3D" id="3.30.1490.20">
    <property type="entry name" value="ATP-grasp fold, A domain"/>
    <property type="match status" value="1"/>
</dbReference>
<dbReference type="Gene3D" id="3.30.470.20">
    <property type="entry name" value="ATP-grasp fold, B domain"/>
    <property type="match status" value="1"/>
</dbReference>
<dbReference type="Gene3D" id="3.20.20.60">
    <property type="entry name" value="Phosphoenolpyruvate-binding domains"/>
    <property type="match status" value="1"/>
</dbReference>
<dbReference type="Gene3D" id="3.50.30.10">
    <property type="entry name" value="Phosphohistidine domain"/>
    <property type="match status" value="1"/>
</dbReference>
<dbReference type="Gene3D" id="1.10.189.10">
    <property type="entry name" value="Pyruvate Phosphate Dikinase, domain 2"/>
    <property type="match status" value="1"/>
</dbReference>
<dbReference type="InterPro" id="IPR013815">
    <property type="entry name" value="ATP_grasp_subdomain_1"/>
</dbReference>
<dbReference type="InterPro" id="IPR008279">
    <property type="entry name" value="PEP-util_enz_mobile_dom"/>
</dbReference>
<dbReference type="InterPro" id="IPR018274">
    <property type="entry name" value="PEP_util_AS"/>
</dbReference>
<dbReference type="InterPro" id="IPR000121">
    <property type="entry name" value="PEP_util_C"/>
</dbReference>
<dbReference type="InterPro" id="IPR023151">
    <property type="entry name" value="PEP_util_CS"/>
</dbReference>
<dbReference type="InterPro" id="IPR036637">
    <property type="entry name" value="Phosphohistidine_dom_sf"/>
</dbReference>
<dbReference type="InterPro" id="IPR002192">
    <property type="entry name" value="PPDK_AMP/ATP-bd"/>
</dbReference>
<dbReference type="InterPro" id="IPR010121">
    <property type="entry name" value="Pyruvate_phosphate_dikinase"/>
</dbReference>
<dbReference type="InterPro" id="IPR015813">
    <property type="entry name" value="Pyrv/PenolPyrv_kinase-like_dom"/>
</dbReference>
<dbReference type="InterPro" id="IPR040442">
    <property type="entry name" value="Pyrv_kinase-like_dom_sf"/>
</dbReference>
<dbReference type="NCBIfam" id="NF004531">
    <property type="entry name" value="PRK05878.1"/>
    <property type="match status" value="1"/>
</dbReference>
<dbReference type="NCBIfam" id="TIGR01828">
    <property type="entry name" value="pyru_phos_dikin"/>
    <property type="match status" value="1"/>
</dbReference>
<dbReference type="PANTHER" id="PTHR22931">
    <property type="entry name" value="PHOSPHOENOLPYRUVATE DIKINASE-RELATED"/>
    <property type="match status" value="1"/>
</dbReference>
<dbReference type="PANTHER" id="PTHR22931:SF9">
    <property type="entry name" value="PYRUVATE, PHOSPHATE DIKINASE 1, CHLOROPLASTIC"/>
    <property type="match status" value="1"/>
</dbReference>
<dbReference type="Pfam" id="PF00391">
    <property type="entry name" value="PEP-utilizers"/>
    <property type="match status" value="1"/>
</dbReference>
<dbReference type="Pfam" id="PF02896">
    <property type="entry name" value="PEP-utilizers_C"/>
    <property type="match status" value="1"/>
</dbReference>
<dbReference type="Pfam" id="PF01326">
    <property type="entry name" value="PPDK_N"/>
    <property type="match status" value="3"/>
</dbReference>
<dbReference type="PIRSF" id="PIRSF000853">
    <property type="entry name" value="PPDK"/>
    <property type="match status" value="1"/>
</dbReference>
<dbReference type="SUPFAM" id="SSF56059">
    <property type="entry name" value="Glutathione synthetase ATP-binding domain-like"/>
    <property type="match status" value="1"/>
</dbReference>
<dbReference type="SUPFAM" id="SSF51621">
    <property type="entry name" value="Phosphoenolpyruvate/pyruvate domain"/>
    <property type="match status" value="1"/>
</dbReference>
<dbReference type="SUPFAM" id="SSF52009">
    <property type="entry name" value="Phosphohistidine domain"/>
    <property type="match status" value="1"/>
</dbReference>
<dbReference type="PROSITE" id="PS00742">
    <property type="entry name" value="PEP_ENZYMES_2"/>
    <property type="match status" value="1"/>
</dbReference>
<dbReference type="PROSITE" id="PS00370">
    <property type="entry name" value="PEP_ENZYMES_PHOS_SITE"/>
    <property type="match status" value="1"/>
</dbReference>
<gene>
    <name type="primary">ppdK</name>
    <name type="ordered locus">RF_0735</name>
</gene>
<organism>
    <name type="scientific">Rickettsia felis (strain ATCC VR-1525 / URRWXCal2)</name>
    <name type="common">Rickettsia azadi</name>
    <dbReference type="NCBI Taxonomy" id="315456"/>
    <lineage>
        <taxon>Bacteria</taxon>
        <taxon>Pseudomonadati</taxon>
        <taxon>Pseudomonadota</taxon>
        <taxon>Alphaproteobacteria</taxon>
        <taxon>Rickettsiales</taxon>
        <taxon>Rickettsiaceae</taxon>
        <taxon>Rickettsieae</taxon>
        <taxon>Rickettsia</taxon>
        <taxon>spotted fever group</taxon>
    </lineage>
</organism>
<protein>
    <recommendedName>
        <fullName>Pyruvate, phosphate dikinase</fullName>
        <ecNumber evidence="3">2.7.9.1</ecNumber>
    </recommendedName>
    <alternativeName>
        <fullName>Pyruvate, orthophosphate dikinase</fullName>
    </alternativeName>
</protein>
<accession>Q4ULI7</accession>
<proteinExistence type="inferred from homology"/>
<reference key="1">
    <citation type="journal article" date="2005" name="PLoS Biol.">
        <title>The genome sequence of Rickettsia felis identifies the first putative conjugative plasmid in an obligate intracellular parasite.</title>
        <authorList>
            <person name="Ogata H."/>
            <person name="Renesto P."/>
            <person name="Audic S."/>
            <person name="Robert C."/>
            <person name="Blanc G."/>
            <person name="Fournier P.-E."/>
            <person name="Parinello H."/>
            <person name="Claverie J.-M."/>
            <person name="Raoult D."/>
        </authorList>
    </citation>
    <scope>NUCLEOTIDE SEQUENCE [LARGE SCALE GENOMIC DNA]</scope>
    <source>
        <strain>ATCC VR-1525 / URRWXCal2</strain>
    </source>
</reference>
<comment type="function">
    <text evidence="3">Catalyzes the reversible phosphorylation of pyruvate and phosphate.</text>
</comment>
<comment type="catalytic activity">
    <reaction evidence="3">
        <text>pyruvate + phosphate + ATP = phosphoenolpyruvate + AMP + diphosphate + H(+)</text>
        <dbReference type="Rhea" id="RHEA:10756"/>
        <dbReference type="ChEBI" id="CHEBI:15361"/>
        <dbReference type="ChEBI" id="CHEBI:15378"/>
        <dbReference type="ChEBI" id="CHEBI:30616"/>
        <dbReference type="ChEBI" id="CHEBI:33019"/>
        <dbReference type="ChEBI" id="CHEBI:43474"/>
        <dbReference type="ChEBI" id="CHEBI:58702"/>
        <dbReference type="ChEBI" id="CHEBI:456215"/>
        <dbReference type="EC" id="2.7.9.1"/>
    </reaction>
</comment>
<comment type="cofactor">
    <cofactor evidence="2">
        <name>Mg(2+)</name>
        <dbReference type="ChEBI" id="CHEBI:18420"/>
    </cofactor>
</comment>
<comment type="activity regulation">
    <text evidence="1">Activated by light-induced dephosphorylation. Inhibited by dark-induced phosphorylation. Both reactions are catalyzed by PDRP1 (By similarity).</text>
</comment>
<comment type="subunit">
    <text evidence="1">Homodimer.</text>
</comment>
<comment type="domain">
    <text evidence="1">The N-terminal domain contains the ATP/Pi active site, the central domain the pyrophosphate/phosphate carrier histidine, and the C-terminal domain the pyruvate active site.</text>
</comment>
<comment type="PTM">
    <text evidence="1">Phosphorylation of Thr-457 in the dark inactivates the enzyme. Dephosphorylation upon light stimulation reactivates the enzyme (By similarity).</text>
</comment>
<comment type="miscellaneous">
    <text>The reaction takes place in three steps, each mediated by a carrier histidine residue located on the surface of the central domain. The two first partial reactions are catalyzed at an active site located on the N-terminal domain, and the third partial reaction is catalyzed at an active site located on the C-terminal domain. For catalytic turnover, the central domain swivels from the concave surface of the N-terminal domain to that of the C-terminal domain.</text>
</comment>
<comment type="similarity">
    <text evidence="5">Belongs to the PEP-utilizing enzyme family.</text>
</comment>
<name>PPDK_RICFE</name>
<evidence type="ECO:0000250" key="1"/>
<evidence type="ECO:0000250" key="2">
    <source>
        <dbReference type="UniProtKB" id="P11155"/>
    </source>
</evidence>
<evidence type="ECO:0000250" key="3">
    <source>
        <dbReference type="UniProtKB" id="P22983"/>
    </source>
</evidence>
<evidence type="ECO:0000255" key="4"/>
<evidence type="ECO:0000305" key="5"/>
<feature type="chain" id="PRO_0000289278" description="Pyruvate, phosphate dikinase">
    <location>
        <begin position="1"/>
        <end position="878"/>
    </location>
</feature>
<feature type="region of interest" description="N-terminal">
    <location>
        <begin position="1"/>
        <end position="347"/>
    </location>
</feature>
<feature type="region of interest" description="Linker 1">
    <location>
        <begin position="348"/>
        <end position="404"/>
    </location>
</feature>
<feature type="region of interest" description="Central">
    <location>
        <begin position="405"/>
        <end position="502"/>
    </location>
</feature>
<feature type="region of interest" description="Linker 2">
    <location>
        <begin position="503"/>
        <end position="537"/>
    </location>
</feature>
<feature type="region of interest" description="C-terminal">
    <location>
        <begin position="538"/>
        <end position="878"/>
    </location>
</feature>
<feature type="active site" description="Tele-phosphohistidine intermediate" evidence="2">
    <location>
        <position position="459"/>
    </location>
</feature>
<feature type="active site" description="Proton donor" evidence="2">
    <location>
        <position position="835"/>
    </location>
</feature>
<feature type="binding site" evidence="4">
    <location>
        <position position="96"/>
    </location>
    <ligand>
        <name>ATP</name>
        <dbReference type="ChEBI" id="CHEBI:30616"/>
    </ligand>
</feature>
<feature type="binding site" evidence="2">
    <location>
        <position position="565"/>
    </location>
    <ligand>
        <name>substrate</name>
    </ligand>
</feature>
<feature type="binding site" evidence="2">
    <location>
        <position position="621"/>
    </location>
    <ligand>
        <name>substrate</name>
    </ligand>
</feature>
<feature type="binding site" evidence="2">
    <location>
        <position position="749"/>
    </location>
    <ligand>
        <name>Mg(2+)</name>
        <dbReference type="ChEBI" id="CHEBI:18420"/>
    </ligand>
</feature>
<feature type="binding site" evidence="2">
    <location>
        <position position="749"/>
    </location>
    <ligand>
        <name>substrate</name>
    </ligand>
</feature>
<feature type="binding site" evidence="2">
    <location>
        <position position="770"/>
    </location>
    <ligand>
        <name>substrate</name>
    </ligand>
</feature>
<feature type="binding site" evidence="2">
    <location>
        <position position="771"/>
    </location>
    <ligand>
        <name>substrate</name>
    </ligand>
</feature>
<feature type="binding site" evidence="2">
    <location>
        <position position="772"/>
    </location>
    <ligand>
        <name>substrate</name>
    </ligand>
</feature>
<feature type="binding site" evidence="2">
    <location>
        <position position="773"/>
    </location>
    <ligand>
        <name>Mg(2+)</name>
        <dbReference type="ChEBI" id="CHEBI:18420"/>
    </ligand>
</feature>
<feature type="binding site" evidence="2">
    <location>
        <position position="773"/>
    </location>
    <ligand>
        <name>substrate</name>
    </ligand>
</feature>
<feature type="modified residue" description="Phosphothreonine; by PDRP1" evidence="1">
    <location>
        <position position="457"/>
    </location>
</feature>
<keyword id="KW-0067">ATP-binding</keyword>
<keyword id="KW-0418">Kinase</keyword>
<keyword id="KW-0460">Magnesium</keyword>
<keyword id="KW-0479">Metal-binding</keyword>
<keyword id="KW-0547">Nucleotide-binding</keyword>
<keyword id="KW-0597">Phosphoprotein</keyword>
<keyword id="KW-0808">Transferase</keyword>